<feature type="chain" id="PRO_0000083856" description="Glycine-rich protein HC1">
    <location>
        <begin position="1"/>
        <end position="144"/>
    </location>
</feature>
<feature type="transmembrane region" description="Helical" evidence="1">
    <location>
        <begin position="5"/>
        <end position="25"/>
    </location>
</feature>
<feature type="repeat" description="1">
    <location>
        <begin position="37"/>
        <end position="42"/>
    </location>
</feature>
<feature type="repeat" description="2">
    <location>
        <begin position="43"/>
        <end position="48"/>
    </location>
</feature>
<feature type="repeat" description="3">
    <location>
        <begin position="50"/>
        <end position="55"/>
    </location>
</feature>
<feature type="repeat" description="4">
    <location>
        <begin position="56"/>
        <end position="61"/>
    </location>
</feature>
<feature type="repeat" description="5">
    <location>
        <begin position="63"/>
        <end position="68"/>
    </location>
</feature>
<feature type="repeat" description="6">
    <location>
        <begin position="69"/>
        <end position="74"/>
    </location>
</feature>
<feature type="repeat" description="7">
    <location>
        <begin position="76"/>
        <end position="81"/>
    </location>
</feature>
<feature type="repeat" description="8">
    <location>
        <begin position="82"/>
        <end position="87"/>
    </location>
</feature>
<feature type="repeat" description="9">
    <location>
        <begin position="89"/>
        <end position="94"/>
    </location>
</feature>
<feature type="repeat" description="10">
    <location>
        <begin position="102"/>
        <end position="107"/>
    </location>
</feature>
<feature type="repeat" description="11">
    <location>
        <begin position="108"/>
        <end position="113"/>
    </location>
</feature>
<feature type="region of interest" description="11 X 6 AA tandem repeats of G-Y-[NH]-N-G -G">
    <location>
        <begin position="37"/>
        <end position="113"/>
    </location>
</feature>
<evidence type="ECO:0000255" key="1"/>
<evidence type="ECO:0000305" key="2"/>
<keyword id="KW-0472">Membrane</keyword>
<keyword id="KW-0677">Repeat</keyword>
<keyword id="KW-0812">Transmembrane</keyword>
<keyword id="KW-1133">Transmembrane helix</keyword>
<name>GRP1_OXYRB</name>
<protein>
    <recommendedName>
        <fullName>Glycine-rich protein HC1</fullName>
    </recommendedName>
</protein>
<reference key="1">
    <citation type="journal article" date="1989" name="Nucleic Acids Res.">
        <title>Sequence of cDNA for a novel light-induced glycine-rich protein.</title>
        <authorList>
            <person name="Kaldenhoff R."/>
            <person name="Richter G."/>
        </authorList>
    </citation>
    <scope>NUCLEOTIDE SEQUENCE [MRNA]</scope>
</reference>
<accession>P11898</accession>
<proteinExistence type="evidence at transcript level"/>
<comment type="subcellular location">
    <subcellularLocation>
        <location evidence="2">Membrane</location>
        <topology evidence="2">Single-pass membrane protein</topology>
    </subcellularLocation>
</comment>
<comment type="induction">
    <text>By light.</text>
</comment>
<comment type="similarity">
    <text evidence="2">Belongs to the GRP family.</text>
</comment>
<sequence>MGSKIFLLLGLSIAFAILISSEVAARELAETAAKTEGYNNGGGYHNGGGGYNNGGGYHNGGGGYNNGGGYHNGGGGYNNGGGYHNGGGGYNNGGGHHNGGGGYNNGGGYHGGGGSCYHYCHGRCCSAAEAKALEATTAQVKPQN</sequence>
<organism>
    <name type="scientific">Oxybasis rubra</name>
    <name type="common">Red goosefoot</name>
    <name type="synonym">Chenopodium rubrum</name>
    <dbReference type="NCBI Taxonomy" id="3560"/>
    <lineage>
        <taxon>Eukaryota</taxon>
        <taxon>Viridiplantae</taxon>
        <taxon>Streptophyta</taxon>
        <taxon>Embryophyta</taxon>
        <taxon>Tracheophyta</taxon>
        <taxon>Spermatophyta</taxon>
        <taxon>Magnoliopsida</taxon>
        <taxon>eudicotyledons</taxon>
        <taxon>Gunneridae</taxon>
        <taxon>Pentapetalae</taxon>
        <taxon>Caryophyllales</taxon>
        <taxon>Chenopodiaceae</taxon>
        <taxon>Chenopodioideae</taxon>
        <taxon>Atripliceae</taxon>
        <taxon>Oxybasis</taxon>
    </lineage>
</organism>
<dbReference type="EMBL" id="X14067">
    <property type="protein sequence ID" value="CAA32230.1"/>
    <property type="molecule type" value="mRNA"/>
</dbReference>
<dbReference type="PIR" id="S04069">
    <property type="entry name" value="S04069"/>
</dbReference>
<dbReference type="GO" id="GO:0016020">
    <property type="term" value="C:membrane"/>
    <property type="evidence" value="ECO:0007669"/>
    <property type="project" value="UniProtKB-SubCell"/>
</dbReference>
<dbReference type="InterPro" id="IPR010800">
    <property type="entry name" value="GRP"/>
</dbReference>
<dbReference type="PANTHER" id="PTHR37389:SF34">
    <property type="entry name" value="GLYCINE-RICH PROTEIN"/>
    <property type="match status" value="1"/>
</dbReference>
<dbReference type="PANTHER" id="PTHR37389">
    <property type="entry name" value="NODULIN-24"/>
    <property type="match status" value="1"/>
</dbReference>
<dbReference type="Pfam" id="PF07172">
    <property type="entry name" value="GRP"/>
    <property type="match status" value="1"/>
</dbReference>